<comment type="function">
    <text evidence="2">Antibacterial protein. Strong activity against the Gram-positive bacteria M.luteus, B.megaterium and S.aureus. Reduced activity against Gram-positive bacterium B.subtilis and weak activity against Gram-negative bacterium X.japonicus. No detectable activity against the Gram-negative bacteria E.asbriae, E.coli, P.aeruginosa and S.marcescens.</text>
</comment>
<comment type="subcellular location">
    <subcellularLocation>
        <location evidence="1 2">Secreted</location>
    </subcellularLocation>
</comment>
<comment type="mass spectrometry"/>
<comment type="similarity">
    <text evidence="1">Belongs to the invertebrate defensin family. Type 1 subfamily.</text>
</comment>
<protein>
    <recommendedName>
        <fullName>Defensin-B</fullName>
    </recommendedName>
</protein>
<proteinExistence type="evidence at protein level"/>
<evidence type="ECO:0000255" key="1">
    <source>
        <dbReference type="PROSITE-ProRule" id="PRU00710"/>
    </source>
</evidence>
<evidence type="ECO:0000269" key="2">
    <source>
    </source>
</evidence>
<evidence type="ECO:0000305" key="3"/>
<feature type="chain" id="PRO_0000074470" description="Defensin-B">
    <location>
        <begin position="1"/>
        <end position="43"/>
    </location>
</feature>
<feature type="disulfide bond" evidence="1">
    <location>
        <begin position="3"/>
        <end position="34"/>
    </location>
</feature>
<feature type="disulfide bond" evidence="1">
    <location>
        <begin position="20"/>
        <end position="39"/>
    </location>
</feature>
<feature type="disulfide bond" evidence="1">
    <location>
        <begin position="24"/>
        <end position="41"/>
    </location>
</feature>
<keyword id="KW-0044">Antibiotic</keyword>
<keyword id="KW-0929">Antimicrobial</keyword>
<keyword id="KW-0211">Defensin</keyword>
<keyword id="KW-0903">Direct protein sequencing</keyword>
<keyword id="KW-1015">Disulfide bond</keyword>
<keyword id="KW-0391">Immunity</keyword>
<keyword id="KW-0399">Innate immunity</keyword>
<keyword id="KW-0964">Secreted</keyword>
<accession>P83668</accession>
<reference evidence="3" key="1">
    <citation type="journal article" date="2001" name="Insect Biochem. Mol. Biol.">
        <title>Two novel insect defensins from larvae of the cupreous chafer, Anomala cuprea: purification, amino acid sequences and antibacterial activity.</title>
        <authorList>
            <person name="Yamauchi H."/>
        </authorList>
    </citation>
    <scope>PROTEIN SEQUENCE</scope>
    <scope>FUNCTION</scope>
    <scope>SUBCELLULAR LOCATION</scope>
    <scope>MASS SPECTROMETRY</scope>
    <source>
        <tissue evidence="2">Larval hemolymph</tissue>
    </source>
</reference>
<name>DEFB_ANOCP</name>
<dbReference type="SMR" id="P83668"/>
<dbReference type="GO" id="GO:0005615">
    <property type="term" value="C:extracellular space"/>
    <property type="evidence" value="ECO:0007669"/>
    <property type="project" value="TreeGrafter"/>
</dbReference>
<dbReference type="GO" id="GO:0042742">
    <property type="term" value="P:defense response to bacterium"/>
    <property type="evidence" value="ECO:0007669"/>
    <property type="project" value="UniProtKB-KW"/>
</dbReference>
<dbReference type="GO" id="GO:0006959">
    <property type="term" value="P:humoral immune response"/>
    <property type="evidence" value="ECO:0007669"/>
    <property type="project" value="TreeGrafter"/>
</dbReference>
<dbReference type="GO" id="GO:0045087">
    <property type="term" value="P:innate immune response"/>
    <property type="evidence" value="ECO:0007669"/>
    <property type="project" value="UniProtKB-KW"/>
</dbReference>
<dbReference type="Gene3D" id="3.30.30.10">
    <property type="entry name" value="Knottin, scorpion toxin-like"/>
    <property type="match status" value="1"/>
</dbReference>
<dbReference type="InterPro" id="IPR017982">
    <property type="entry name" value="Defensin_insect"/>
</dbReference>
<dbReference type="InterPro" id="IPR001542">
    <property type="entry name" value="Defensin_invertebrate/fungal"/>
</dbReference>
<dbReference type="InterPro" id="IPR003614">
    <property type="entry name" value="Scorpion_toxin-like"/>
</dbReference>
<dbReference type="InterPro" id="IPR036574">
    <property type="entry name" value="Scorpion_toxin-like_sf"/>
</dbReference>
<dbReference type="PANTHER" id="PTHR13645">
    <property type="entry name" value="DEFENSIN"/>
    <property type="match status" value="1"/>
</dbReference>
<dbReference type="PANTHER" id="PTHR13645:SF0">
    <property type="entry name" value="DEFENSIN"/>
    <property type="match status" value="1"/>
</dbReference>
<dbReference type="Pfam" id="PF01097">
    <property type="entry name" value="Defensin_2"/>
    <property type="match status" value="1"/>
</dbReference>
<dbReference type="PRINTS" id="PR00271">
    <property type="entry name" value="DEFENSIN"/>
</dbReference>
<dbReference type="SMART" id="SM00505">
    <property type="entry name" value="Knot1"/>
    <property type="match status" value="1"/>
</dbReference>
<dbReference type="SUPFAM" id="SSF57095">
    <property type="entry name" value="Scorpion toxin-like"/>
    <property type="match status" value="1"/>
</dbReference>
<dbReference type="PROSITE" id="PS51378">
    <property type="entry name" value="INVERT_DEFENSINS"/>
    <property type="match status" value="1"/>
</dbReference>
<sequence>VTCDLLSFEAKGFAANHSICAAHCLVIGRKGGACQNGVCVCRN</sequence>
<organism evidence="3">
    <name type="scientific">Anomala cuprea</name>
    <name type="common">Cupreous chafer beetle</name>
    <dbReference type="NCBI Taxonomy" id="121601"/>
    <lineage>
        <taxon>Eukaryota</taxon>
        <taxon>Metazoa</taxon>
        <taxon>Ecdysozoa</taxon>
        <taxon>Arthropoda</taxon>
        <taxon>Hexapoda</taxon>
        <taxon>Insecta</taxon>
        <taxon>Pterygota</taxon>
        <taxon>Neoptera</taxon>
        <taxon>Endopterygota</taxon>
        <taxon>Coleoptera</taxon>
        <taxon>Polyphaga</taxon>
        <taxon>Scarabaeiformia</taxon>
        <taxon>Scarabaeidae</taxon>
        <taxon>Rutelinae</taxon>
        <taxon>Anomala</taxon>
    </lineage>
</organism>